<feature type="chain" id="PRO_0000380609" description="Uncharacterized methyltransferase MRA_0232">
    <location>
        <begin position="1"/>
        <end position="254"/>
    </location>
</feature>
<sequence>MAVTDVFARRATLRRSLRLLADFRYEQRDPARFYRTLAADTAAMIGDLWLATHSEPPVGRTLLDVGGGPGYFATAFSDAGVGYIGVEPDPDEMHAAGPAFTGRPGMFVRASGMALPFADDSVDICLSSNVAEHVPRPWQLGTEMLRVTKPGGLVVLSYTVWLGPFGGHEMGLSHYLGGARAAARYVRKHGHPAKNNYGSSLFAVSAAEGLRWAAGTGAALAVFPRYHPRWAWWLTSVPVLREFLVSNLVLVLTP</sequence>
<comment type="similarity">
    <text evidence="1">Belongs to the methyltransferase superfamily.</text>
</comment>
<dbReference type="EC" id="2.1.1.-"/>
<dbReference type="EMBL" id="CP000611">
    <property type="protein sequence ID" value="ABQ71949.1"/>
    <property type="molecule type" value="Genomic_DNA"/>
</dbReference>
<dbReference type="RefSeq" id="WP_003401240.1">
    <property type="nucleotide sequence ID" value="NZ_CP016972.1"/>
</dbReference>
<dbReference type="KEGG" id="mra:MRA_0232"/>
<dbReference type="eggNOG" id="COG0500">
    <property type="taxonomic scope" value="Bacteria"/>
</dbReference>
<dbReference type="HOGENOM" id="CLU_073035_0_0_11"/>
<dbReference type="Proteomes" id="UP000001988">
    <property type="component" value="Chromosome"/>
</dbReference>
<dbReference type="GO" id="GO:0008757">
    <property type="term" value="F:S-adenosylmethionine-dependent methyltransferase activity"/>
    <property type="evidence" value="ECO:0007669"/>
    <property type="project" value="InterPro"/>
</dbReference>
<dbReference type="GO" id="GO:0032259">
    <property type="term" value="P:methylation"/>
    <property type="evidence" value="ECO:0007669"/>
    <property type="project" value="UniProtKB-KW"/>
</dbReference>
<dbReference type="CDD" id="cd02440">
    <property type="entry name" value="AdoMet_MTases"/>
    <property type="match status" value="1"/>
</dbReference>
<dbReference type="Gene3D" id="3.40.50.150">
    <property type="entry name" value="Vaccinia Virus protein VP39"/>
    <property type="match status" value="1"/>
</dbReference>
<dbReference type="InterPro" id="IPR013216">
    <property type="entry name" value="Methyltransf_11"/>
</dbReference>
<dbReference type="InterPro" id="IPR029063">
    <property type="entry name" value="SAM-dependent_MTases_sf"/>
</dbReference>
<dbReference type="PANTHER" id="PTHR43591:SF24">
    <property type="entry name" value="2-METHOXY-6-POLYPRENYL-1,4-BENZOQUINOL METHYLASE, MITOCHONDRIAL"/>
    <property type="match status" value="1"/>
</dbReference>
<dbReference type="PANTHER" id="PTHR43591">
    <property type="entry name" value="METHYLTRANSFERASE"/>
    <property type="match status" value="1"/>
</dbReference>
<dbReference type="Pfam" id="PF08241">
    <property type="entry name" value="Methyltransf_11"/>
    <property type="match status" value="1"/>
</dbReference>
<dbReference type="SUPFAM" id="SSF53335">
    <property type="entry name" value="S-adenosyl-L-methionine-dependent methyltransferases"/>
    <property type="match status" value="1"/>
</dbReference>
<reference key="1">
    <citation type="journal article" date="2008" name="PLoS ONE">
        <title>Genetic basis of virulence attenuation revealed by comparative genomic analysis of Mycobacterium tuberculosis strain H37Ra versus H37Rv.</title>
        <authorList>
            <person name="Zheng H."/>
            <person name="Lu L."/>
            <person name="Wang B."/>
            <person name="Pu S."/>
            <person name="Zhang X."/>
            <person name="Zhu G."/>
            <person name="Shi W."/>
            <person name="Zhang L."/>
            <person name="Wang H."/>
            <person name="Wang S."/>
            <person name="Zhao G."/>
            <person name="Zhang Y."/>
        </authorList>
    </citation>
    <scope>NUCLEOTIDE SEQUENCE [LARGE SCALE GENOMIC DNA]</scope>
    <source>
        <strain>ATCC 25177 / H37Ra</strain>
    </source>
</reference>
<gene>
    <name type="ordered locus">MRA_0232</name>
</gene>
<proteinExistence type="inferred from homology"/>
<evidence type="ECO:0000305" key="1"/>
<accession>A5TYU9</accession>
<organism>
    <name type="scientific">Mycobacterium tuberculosis (strain ATCC 25177 / H37Ra)</name>
    <dbReference type="NCBI Taxonomy" id="419947"/>
    <lineage>
        <taxon>Bacteria</taxon>
        <taxon>Bacillati</taxon>
        <taxon>Actinomycetota</taxon>
        <taxon>Actinomycetes</taxon>
        <taxon>Mycobacteriales</taxon>
        <taxon>Mycobacteriaceae</taxon>
        <taxon>Mycobacterium</taxon>
        <taxon>Mycobacterium tuberculosis complex</taxon>
    </lineage>
</organism>
<name>Y232_MYCTA</name>
<protein>
    <recommendedName>
        <fullName>Uncharacterized methyltransferase MRA_0232</fullName>
        <ecNumber>2.1.1.-</ecNumber>
    </recommendedName>
</protein>
<keyword id="KW-0489">Methyltransferase</keyword>
<keyword id="KW-1185">Reference proteome</keyword>
<keyword id="KW-0808">Transferase</keyword>